<gene>
    <name evidence="1" type="primary">psaI</name>
</gene>
<comment type="function">
    <text evidence="1">May help in the organization of the PsaL subunit.</text>
</comment>
<comment type="subcellular location">
    <subcellularLocation>
        <location evidence="1">Plastid</location>
        <location evidence="1">Chloroplast thylakoid membrane</location>
        <topology evidence="1">Single-pass membrane protein</topology>
    </subcellularLocation>
</comment>
<comment type="similarity">
    <text evidence="1">Belongs to the PsaI family.</text>
</comment>
<accession>Q1XDA0</accession>
<dbReference type="EMBL" id="AP006715">
    <property type="protein sequence ID" value="BAE92511.1"/>
    <property type="molecule type" value="Genomic_DNA"/>
</dbReference>
<dbReference type="RefSeq" id="YP_537068.1">
    <property type="nucleotide sequence ID" value="NC_007932.1"/>
</dbReference>
<dbReference type="SMR" id="Q1XDA0"/>
<dbReference type="GeneID" id="3978952"/>
<dbReference type="GO" id="GO:0009535">
    <property type="term" value="C:chloroplast thylakoid membrane"/>
    <property type="evidence" value="ECO:0007669"/>
    <property type="project" value="UniProtKB-SubCell"/>
</dbReference>
<dbReference type="GO" id="GO:0009522">
    <property type="term" value="C:photosystem I"/>
    <property type="evidence" value="ECO:0007669"/>
    <property type="project" value="UniProtKB-KW"/>
</dbReference>
<dbReference type="GO" id="GO:0015979">
    <property type="term" value="P:photosynthesis"/>
    <property type="evidence" value="ECO:0007669"/>
    <property type="project" value="UniProtKB-UniRule"/>
</dbReference>
<dbReference type="HAMAP" id="MF_00431">
    <property type="entry name" value="PSI_PsaI"/>
    <property type="match status" value="1"/>
</dbReference>
<dbReference type="InterPro" id="IPR001302">
    <property type="entry name" value="PSI_PsaI"/>
</dbReference>
<dbReference type="InterPro" id="IPR036357">
    <property type="entry name" value="PSI_PsaI_sf"/>
</dbReference>
<dbReference type="NCBIfam" id="NF008830">
    <property type="entry name" value="PRK11877.1"/>
    <property type="match status" value="1"/>
</dbReference>
<dbReference type="NCBIfam" id="TIGR03052">
    <property type="entry name" value="PS_I_psaI"/>
    <property type="match status" value="1"/>
</dbReference>
<dbReference type="PANTHER" id="PTHR35775">
    <property type="match status" value="1"/>
</dbReference>
<dbReference type="PANTHER" id="PTHR35775:SF2">
    <property type="entry name" value="PHOTOSYSTEM I REACTION CENTER SUBUNIT VIII"/>
    <property type="match status" value="1"/>
</dbReference>
<dbReference type="Pfam" id="PF00796">
    <property type="entry name" value="PSI_8"/>
    <property type="match status" value="1"/>
</dbReference>
<dbReference type="SUPFAM" id="SSF81540">
    <property type="entry name" value="Subunit VIII of photosystem I reaction centre, PsaI"/>
    <property type="match status" value="1"/>
</dbReference>
<geneLocation type="chloroplast"/>
<protein>
    <recommendedName>
        <fullName evidence="1">Photosystem I reaction center subunit VIII</fullName>
        <shortName evidence="1">PSI-I</shortName>
    </recommendedName>
</protein>
<keyword id="KW-0150">Chloroplast</keyword>
<keyword id="KW-0472">Membrane</keyword>
<keyword id="KW-0602">Photosynthesis</keyword>
<keyword id="KW-0603">Photosystem I</keyword>
<keyword id="KW-0934">Plastid</keyword>
<keyword id="KW-0793">Thylakoid</keyword>
<keyword id="KW-0812">Transmembrane</keyword>
<keyword id="KW-1133">Transmembrane helix</keyword>
<sequence>MTAAYLPSILVPLVGLIFPALSMALLFIYIEKETIA</sequence>
<proteinExistence type="inferred from homology"/>
<name>PSAI_PYRYE</name>
<feature type="chain" id="PRO_0000276045" description="Photosystem I reaction center subunit VIII">
    <location>
        <begin position="1"/>
        <end position="36"/>
    </location>
</feature>
<feature type="transmembrane region" description="Helical" evidence="1">
    <location>
        <begin position="9"/>
        <end position="29"/>
    </location>
</feature>
<organism>
    <name type="scientific">Pyropia yezoensis</name>
    <name type="common">Susabi-nori</name>
    <name type="synonym">Porphyra yezoensis</name>
    <dbReference type="NCBI Taxonomy" id="2788"/>
    <lineage>
        <taxon>Eukaryota</taxon>
        <taxon>Rhodophyta</taxon>
        <taxon>Bangiophyceae</taxon>
        <taxon>Bangiales</taxon>
        <taxon>Bangiaceae</taxon>
        <taxon>Pyropia</taxon>
    </lineage>
</organism>
<reference key="1">
    <citation type="submission" date="2003-11" db="EMBL/GenBank/DDBJ databases">
        <title>Whole genome sequence of Porphyra yezoensis chloroplast.</title>
        <authorList>
            <person name="Kunimoto M."/>
            <person name="Morishima K."/>
            <person name="Yoshikawa M."/>
            <person name="Fukuda S."/>
            <person name="Kobayashi T."/>
            <person name="Kobayashi M."/>
            <person name="Okazaki T."/>
            <person name="Ohara I."/>
            <person name="Nakayama I."/>
        </authorList>
    </citation>
    <scope>NUCLEOTIDE SEQUENCE [LARGE SCALE GENOMIC DNA]</scope>
    <source>
        <strain>U-51</strain>
    </source>
</reference>
<evidence type="ECO:0000255" key="1">
    <source>
        <dbReference type="HAMAP-Rule" id="MF_00431"/>
    </source>
</evidence>